<protein>
    <recommendedName>
        <fullName evidence="1">Bifunctional protein GlmU</fullName>
    </recommendedName>
    <domain>
        <recommendedName>
            <fullName evidence="1">UDP-N-acetylglucosamine pyrophosphorylase</fullName>
            <ecNumber evidence="1">2.7.7.23</ecNumber>
        </recommendedName>
        <alternativeName>
            <fullName evidence="1">N-acetylglucosamine-1-phosphate uridyltransferase</fullName>
        </alternativeName>
    </domain>
    <domain>
        <recommendedName>
            <fullName evidence="1">Glucosamine-1-phosphate N-acetyltransferase</fullName>
            <ecNumber evidence="1">2.3.1.157</ecNumber>
        </recommendedName>
    </domain>
</protein>
<evidence type="ECO:0000255" key="1">
    <source>
        <dbReference type="HAMAP-Rule" id="MF_01631"/>
    </source>
</evidence>
<sequence length="455" mass="50046">MYNCAILLAAGEGKRMKSATPKVLHKVCGKEMVNHVIDALREANIEDVNVIVGKKAKEVQLKTESRSVSFSFQEQQLGTGHAVKCAKEFLLGKEGNVAIFTGDAPLITSKTIKTLMEYHETNGFHGTILTSIIDNPSGYGRVLRENNGEVDKIIEHKDCLKEELKIKEINAGMYCFNIQALLEALDKLDNNNAQGEYYLTDVIEILKKDGKKVGALAVNFEETMGVNSRLQLAEVEAIMRKRINAMHLENGVTIIDPNNTYIDCNVVIHNDSIIYPGNILQGKTVIKENCVLYPNSRIVDSIIEKSVVIQNSVILQSNIGENTTVGPFAYIRPDSNIGSAVRIGDFVEIKKSTIGNNTKVSHLTYIGDAEVGERCNFGCGTVVVNYDGKEKHKTIVGDDVFIGCNANLVSPVEVKDNSYIAAGSTITDEVPRGALAIARSKQINKEDWVKKKDEK</sequence>
<organism>
    <name type="scientific">Clostridium tetani (strain Massachusetts / E88)</name>
    <dbReference type="NCBI Taxonomy" id="212717"/>
    <lineage>
        <taxon>Bacteria</taxon>
        <taxon>Bacillati</taxon>
        <taxon>Bacillota</taxon>
        <taxon>Clostridia</taxon>
        <taxon>Eubacteriales</taxon>
        <taxon>Clostridiaceae</taxon>
        <taxon>Clostridium</taxon>
    </lineage>
</organism>
<keyword id="KW-0012">Acyltransferase</keyword>
<keyword id="KW-0133">Cell shape</keyword>
<keyword id="KW-0961">Cell wall biogenesis/degradation</keyword>
<keyword id="KW-0963">Cytoplasm</keyword>
<keyword id="KW-0460">Magnesium</keyword>
<keyword id="KW-0479">Metal-binding</keyword>
<keyword id="KW-0511">Multifunctional enzyme</keyword>
<keyword id="KW-0548">Nucleotidyltransferase</keyword>
<keyword id="KW-0573">Peptidoglycan synthesis</keyword>
<keyword id="KW-1185">Reference proteome</keyword>
<keyword id="KW-0677">Repeat</keyword>
<keyword id="KW-0808">Transferase</keyword>
<name>GLMU_CLOTE</name>
<comment type="function">
    <text evidence="1">Catalyzes the last two sequential reactions in the de novo biosynthetic pathway for UDP-N-acetylglucosamine (UDP-GlcNAc). The C-terminal domain catalyzes the transfer of acetyl group from acetyl coenzyme A to glucosamine-1-phosphate (GlcN-1-P) to produce N-acetylglucosamine-1-phosphate (GlcNAc-1-P), which is converted into UDP-GlcNAc by the transfer of uridine 5-monophosphate (from uridine 5-triphosphate), a reaction catalyzed by the N-terminal domain.</text>
</comment>
<comment type="catalytic activity">
    <reaction evidence="1">
        <text>alpha-D-glucosamine 1-phosphate + acetyl-CoA = N-acetyl-alpha-D-glucosamine 1-phosphate + CoA + H(+)</text>
        <dbReference type="Rhea" id="RHEA:13725"/>
        <dbReference type="ChEBI" id="CHEBI:15378"/>
        <dbReference type="ChEBI" id="CHEBI:57287"/>
        <dbReference type="ChEBI" id="CHEBI:57288"/>
        <dbReference type="ChEBI" id="CHEBI:57776"/>
        <dbReference type="ChEBI" id="CHEBI:58516"/>
        <dbReference type="EC" id="2.3.1.157"/>
    </reaction>
</comment>
<comment type="catalytic activity">
    <reaction evidence="1">
        <text>N-acetyl-alpha-D-glucosamine 1-phosphate + UTP + H(+) = UDP-N-acetyl-alpha-D-glucosamine + diphosphate</text>
        <dbReference type="Rhea" id="RHEA:13509"/>
        <dbReference type="ChEBI" id="CHEBI:15378"/>
        <dbReference type="ChEBI" id="CHEBI:33019"/>
        <dbReference type="ChEBI" id="CHEBI:46398"/>
        <dbReference type="ChEBI" id="CHEBI:57705"/>
        <dbReference type="ChEBI" id="CHEBI:57776"/>
        <dbReference type="EC" id="2.7.7.23"/>
    </reaction>
</comment>
<comment type="cofactor">
    <cofactor evidence="1">
        <name>Mg(2+)</name>
        <dbReference type="ChEBI" id="CHEBI:18420"/>
    </cofactor>
    <text evidence="1">Binds 1 Mg(2+) ion per subunit.</text>
</comment>
<comment type="pathway">
    <text evidence="1">Nucleotide-sugar biosynthesis; UDP-N-acetyl-alpha-D-glucosamine biosynthesis; N-acetyl-alpha-D-glucosamine 1-phosphate from alpha-D-glucosamine 6-phosphate (route II): step 2/2.</text>
</comment>
<comment type="pathway">
    <text evidence="1">Nucleotide-sugar biosynthesis; UDP-N-acetyl-alpha-D-glucosamine biosynthesis; UDP-N-acetyl-alpha-D-glucosamine from N-acetyl-alpha-D-glucosamine 1-phosphate: step 1/1.</text>
</comment>
<comment type="pathway">
    <text evidence="1">Bacterial outer membrane biogenesis; LPS lipid A biosynthesis.</text>
</comment>
<comment type="subunit">
    <text evidence="1">Homotrimer.</text>
</comment>
<comment type="subcellular location">
    <subcellularLocation>
        <location evidence="1">Cytoplasm</location>
    </subcellularLocation>
</comment>
<comment type="similarity">
    <text evidence="1">In the N-terminal section; belongs to the N-acetylglucosamine-1-phosphate uridyltransferase family.</text>
</comment>
<comment type="similarity">
    <text evidence="1">In the C-terminal section; belongs to the transferase hexapeptide repeat family.</text>
</comment>
<feature type="chain" id="PRO_0000233758" description="Bifunctional protein GlmU">
    <location>
        <begin position="1"/>
        <end position="455"/>
    </location>
</feature>
<feature type="region of interest" description="Pyrophosphorylase" evidence="1">
    <location>
        <begin position="1"/>
        <end position="229"/>
    </location>
</feature>
<feature type="region of interest" description="Linker" evidence="1">
    <location>
        <begin position="230"/>
        <end position="250"/>
    </location>
</feature>
<feature type="region of interest" description="N-acetyltransferase" evidence="1">
    <location>
        <begin position="251"/>
        <end position="455"/>
    </location>
</feature>
<feature type="active site" description="Proton acceptor" evidence="1">
    <location>
        <position position="362"/>
    </location>
</feature>
<feature type="binding site" evidence="1">
    <location>
        <begin position="8"/>
        <end position="11"/>
    </location>
    <ligand>
        <name>UDP-N-acetyl-alpha-D-glucosamine</name>
        <dbReference type="ChEBI" id="CHEBI:57705"/>
    </ligand>
</feature>
<feature type="binding site" evidence="1">
    <location>
        <position position="22"/>
    </location>
    <ligand>
        <name>UDP-N-acetyl-alpha-D-glucosamine</name>
        <dbReference type="ChEBI" id="CHEBI:57705"/>
    </ligand>
</feature>
<feature type="binding site" evidence="1">
    <location>
        <position position="73"/>
    </location>
    <ligand>
        <name>UDP-N-acetyl-alpha-D-glucosamine</name>
        <dbReference type="ChEBI" id="CHEBI:57705"/>
    </ligand>
</feature>
<feature type="binding site" evidence="1">
    <location>
        <begin position="78"/>
        <end position="79"/>
    </location>
    <ligand>
        <name>UDP-N-acetyl-alpha-D-glucosamine</name>
        <dbReference type="ChEBI" id="CHEBI:57705"/>
    </ligand>
</feature>
<feature type="binding site" evidence="1">
    <location>
        <position position="103"/>
    </location>
    <ligand>
        <name>Mg(2+)</name>
        <dbReference type="ChEBI" id="CHEBI:18420"/>
    </ligand>
</feature>
<feature type="binding site" evidence="1">
    <location>
        <position position="140"/>
    </location>
    <ligand>
        <name>UDP-N-acetyl-alpha-D-glucosamine</name>
        <dbReference type="ChEBI" id="CHEBI:57705"/>
    </ligand>
</feature>
<feature type="binding site" evidence="1">
    <location>
        <position position="155"/>
    </location>
    <ligand>
        <name>UDP-N-acetyl-alpha-D-glucosamine</name>
        <dbReference type="ChEBI" id="CHEBI:57705"/>
    </ligand>
</feature>
<feature type="binding site" evidence="1">
    <location>
        <position position="170"/>
    </location>
    <ligand>
        <name>UDP-N-acetyl-alpha-D-glucosamine</name>
        <dbReference type="ChEBI" id="CHEBI:57705"/>
    </ligand>
</feature>
<feature type="binding site" evidence="1">
    <location>
        <position position="227"/>
    </location>
    <ligand>
        <name>Mg(2+)</name>
        <dbReference type="ChEBI" id="CHEBI:18420"/>
    </ligand>
</feature>
<feature type="binding site" evidence="1">
    <location>
        <position position="227"/>
    </location>
    <ligand>
        <name>UDP-N-acetyl-alpha-D-glucosamine</name>
        <dbReference type="ChEBI" id="CHEBI:57705"/>
    </ligand>
</feature>
<feature type="binding site" evidence="1">
    <location>
        <position position="332"/>
    </location>
    <ligand>
        <name>UDP-N-acetyl-alpha-D-glucosamine</name>
        <dbReference type="ChEBI" id="CHEBI:57705"/>
    </ligand>
</feature>
<feature type="binding site" evidence="1">
    <location>
        <position position="350"/>
    </location>
    <ligand>
        <name>UDP-N-acetyl-alpha-D-glucosamine</name>
        <dbReference type="ChEBI" id="CHEBI:57705"/>
    </ligand>
</feature>
<feature type="binding site" evidence="1">
    <location>
        <position position="365"/>
    </location>
    <ligand>
        <name>UDP-N-acetyl-alpha-D-glucosamine</name>
        <dbReference type="ChEBI" id="CHEBI:57705"/>
    </ligand>
</feature>
<feature type="binding site" evidence="1">
    <location>
        <position position="376"/>
    </location>
    <ligand>
        <name>UDP-N-acetyl-alpha-D-glucosamine</name>
        <dbReference type="ChEBI" id="CHEBI:57705"/>
    </ligand>
</feature>
<feature type="binding site" evidence="1">
    <location>
        <begin position="385"/>
        <end position="386"/>
    </location>
    <ligand>
        <name>acetyl-CoA</name>
        <dbReference type="ChEBI" id="CHEBI:57288"/>
    </ligand>
</feature>
<feature type="binding site" evidence="1">
    <location>
        <position position="422"/>
    </location>
    <ligand>
        <name>acetyl-CoA</name>
        <dbReference type="ChEBI" id="CHEBI:57288"/>
    </ligand>
</feature>
<feature type="binding site" evidence="1">
    <location>
        <position position="439"/>
    </location>
    <ligand>
        <name>acetyl-CoA</name>
        <dbReference type="ChEBI" id="CHEBI:57288"/>
    </ligand>
</feature>
<gene>
    <name evidence="1" type="primary">glmU</name>
    <name type="ordered locus">CTC_00187</name>
</gene>
<dbReference type="EC" id="2.7.7.23" evidence="1"/>
<dbReference type="EC" id="2.3.1.157" evidence="1"/>
<dbReference type="EMBL" id="AE015927">
    <property type="protein sequence ID" value="AAO34837.1"/>
    <property type="molecule type" value="Genomic_DNA"/>
</dbReference>
<dbReference type="RefSeq" id="WP_011098507.1">
    <property type="nucleotide sequence ID" value="NC_004557.1"/>
</dbReference>
<dbReference type="SMR" id="Q899I9"/>
<dbReference type="STRING" id="212717.CTC_00187"/>
<dbReference type="GeneID" id="24255004"/>
<dbReference type="KEGG" id="ctc:CTC_00187"/>
<dbReference type="HOGENOM" id="CLU_029499_15_2_9"/>
<dbReference type="OrthoDB" id="9775031at2"/>
<dbReference type="UniPathway" id="UPA00113">
    <property type="reaction ID" value="UER00532"/>
</dbReference>
<dbReference type="UniPathway" id="UPA00113">
    <property type="reaction ID" value="UER00533"/>
</dbReference>
<dbReference type="UniPathway" id="UPA00973"/>
<dbReference type="Proteomes" id="UP000001412">
    <property type="component" value="Chromosome"/>
</dbReference>
<dbReference type="GO" id="GO:0005737">
    <property type="term" value="C:cytoplasm"/>
    <property type="evidence" value="ECO:0007669"/>
    <property type="project" value="UniProtKB-SubCell"/>
</dbReference>
<dbReference type="GO" id="GO:0016020">
    <property type="term" value="C:membrane"/>
    <property type="evidence" value="ECO:0007669"/>
    <property type="project" value="GOC"/>
</dbReference>
<dbReference type="GO" id="GO:0019134">
    <property type="term" value="F:glucosamine-1-phosphate N-acetyltransferase activity"/>
    <property type="evidence" value="ECO:0007669"/>
    <property type="project" value="UniProtKB-UniRule"/>
</dbReference>
<dbReference type="GO" id="GO:0000287">
    <property type="term" value="F:magnesium ion binding"/>
    <property type="evidence" value="ECO:0007669"/>
    <property type="project" value="UniProtKB-UniRule"/>
</dbReference>
<dbReference type="GO" id="GO:0003977">
    <property type="term" value="F:UDP-N-acetylglucosamine diphosphorylase activity"/>
    <property type="evidence" value="ECO:0007669"/>
    <property type="project" value="UniProtKB-UniRule"/>
</dbReference>
<dbReference type="GO" id="GO:0000902">
    <property type="term" value="P:cell morphogenesis"/>
    <property type="evidence" value="ECO:0007669"/>
    <property type="project" value="UniProtKB-UniRule"/>
</dbReference>
<dbReference type="GO" id="GO:0071555">
    <property type="term" value="P:cell wall organization"/>
    <property type="evidence" value="ECO:0007669"/>
    <property type="project" value="UniProtKB-KW"/>
</dbReference>
<dbReference type="GO" id="GO:0009245">
    <property type="term" value="P:lipid A biosynthetic process"/>
    <property type="evidence" value="ECO:0007669"/>
    <property type="project" value="UniProtKB-UniRule"/>
</dbReference>
<dbReference type="GO" id="GO:0009252">
    <property type="term" value="P:peptidoglycan biosynthetic process"/>
    <property type="evidence" value="ECO:0007669"/>
    <property type="project" value="UniProtKB-UniRule"/>
</dbReference>
<dbReference type="GO" id="GO:0008360">
    <property type="term" value="P:regulation of cell shape"/>
    <property type="evidence" value="ECO:0007669"/>
    <property type="project" value="UniProtKB-KW"/>
</dbReference>
<dbReference type="GO" id="GO:0006048">
    <property type="term" value="P:UDP-N-acetylglucosamine biosynthetic process"/>
    <property type="evidence" value="ECO:0007669"/>
    <property type="project" value="UniProtKB-UniPathway"/>
</dbReference>
<dbReference type="CDD" id="cd02540">
    <property type="entry name" value="GT2_GlmU_N_bac"/>
    <property type="match status" value="1"/>
</dbReference>
<dbReference type="CDD" id="cd03353">
    <property type="entry name" value="LbH_GlmU_C"/>
    <property type="match status" value="1"/>
</dbReference>
<dbReference type="Gene3D" id="2.160.10.10">
    <property type="entry name" value="Hexapeptide repeat proteins"/>
    <property type="match status" value="1"/>
</dbReference>
<dbReference type="Gene3D" id="3.90.550.10">
    <property type="entry name" value="Spore Coat Polysaccharide Biosynthesis Protein SpsA, Chain A"/>
    <property type="match status" value="1"/>
</dbReference>
<dbReference type="HAMAP" id="MF_01631">
    <property type="entry name" value="GlmU"/>
    <property type="match status" value="1"/>
</dbReference>
<dbReference type="InterPro" id="IPR005882">
    <property type="entry name" value="Bifunctional_GlmU"/>
</dbReference>
<dbReference type="InterPro" id="IPR050065">
    <property type="entry name" value="GlmU-like"/>
</dbReference>
<dbReference type="InterPro" id="IPR038009">
    <property type="entry name" value="GlmU_C_LbH"/>
</dbReference>
<dbReference type="InterPro" id="IPR001451">
    <property type="entry name" value="Hexapep"/>
</dbReference>
<dbReference type="InterPro" id="IPR005835">
    <property type="entry name" value="NTP_transferase_dom"/>
</dbReference>
<dbReference type="InterPro" id="IPR029044">
    <property type="entry name" value="Nucleotide-diphossugar_trans"/>
</dbReference>
<dbReference type="InterPro" id="IPR011004">
    <property type="entry name" value="Trimer_LpxA-like_sf"/>
</dbReference>
<dbReference type="NCBIfam" id="TIGR01173">
    <property type="entry name" value="glmU"/>
    <property type="match status" value="1"/>
</dbReference>
<dbReference type="NCBIfam" id="NF010934">
    <property type="entry name" value="PRK14354.1"/>
    <property type="match status" value="1"/>
</dbReference>
<dbReference type="PANTHER" id="PTHR43584:SF3">
    <property type="entry name" value="BIFUNCTIONAL PROTEIN GLMU"/>
    <property type="match status" value="1"/>
</dbReference>
<dbReference type="PANTHER" id="PTHR43584">
    <property type="entry name" value="NUCLEOTIDYL TRANSFERASE"/>
    <property type="match status" value="1"/>
</dbReference>
<dbReference type="Pfam" id="PF00132">
    <property type="entry name" value="Hexapep"/>
    <property type="match status" value="2"/>
</dbReference>
<dbReference type="Pfam" id="PF00483">
    <property type="entry name" value="NTP_transferase"/>
    <property type="match status" value="1"/>
</dbReference>
<dbReference type="SUPFAM" id="SSF53448">
    <property type="entry name" value="Nucleotide-diphospho-sugar transferases"/>
    <property type="match status" value="1"/>
</dbReference>
<dbReference type="SUPFAM" id="SSF51161">
    <property type="entry name" value="Trimeric LpxA-like enzymes"/>
    <property type="match status" value="1"/>
</dbReference>
<reference key="1">
    <citation type="journal article" date="2003" name="Proc. Natl. Acad. Sci. U.S.A.">
        <title>The genome sequence of Clostridium tetani, the causative agent of tetanus disease.</title>
        <authorList>
            <person name="Brueggemann H."/>
            <person name="Baeumer S."/>
            <person name="Fricke W.F."/>
            <person name="Wiezer A."/>
            <person name="Liesegang H."/>
            <person name="Decker I."/>
            <person name="Herzberg C."/>
            <person name="Martinez-Arias R."/>
            <person name="Merkl R."/>
            <person name="Henne A."/>
            <person name="Gottschalk G."/>
        </authorList>
    </citation>
    <scope>NUCLEOTIDE SEQUENCE [LARGE SCALE GENOMIC DNA]</scope>
    <source>
        <strain>Massachusetts / E88</strain>
    </source>
</reference>
<accession>Q899I9</accession>
<proteinExistence type="inferred from homology"/>